<name>LPLT_YERPG</name>
<accession>A9R2S0</accession>
<reference key="1">
    <citation type="journal article" date="2010" name="J. Bacteriol.">
        <title>Genome sequence of the deep-rooted Yersinia pestis strain Angola reveals new insights into the evolution and pangenome of the plague bacterium.</title>
        <authorList>
            <person name="Eppinger M."/>
            <person name="Worsham P.L."/>
            <person name="Nikolich M.P."/>
            <person name="Riley D.R."/>
            <person name="Sebastian Y."/>
            <person name="Mou S."/>
            <person name="Achtman M."/>
            <person name="Lindler L.E."/>
            <person name="Ravel J."/>
        </authorList>
    </citation>
    <scope>NUCLEOTIDE SEQUENCE [LARGE SCALE GENOMIC DNA]</scope>
    <source>
        <strain>Angola</strain>
    </source>
</reference>
<protein>
    <recommendedName>
        <fullName evidence="1">Lysophospholipid transporter LplT</fullName>
    </recommendedName>
</protein>
<evidence type="ECO:0000255" key="1">
    <source>
        <dbReference type="HAMAP-Rule" id="MF_01585"/>
    </source>
</evidence>
<gene>
    <name evidence="1" type="primary">lplT</name>
    <name type="ordered locus">YpAngola_A3245</name>
</gene>
<dbReference type="EMBL" id="CP000901">
    <property type="protein sequence ID" value="ABX87842.1"/>
    <property type="molecule type" value="Genomic_DNA"/>
</dbReference>
<dbReference type="RefSeq" id="WP_002209842.1">
    <property type="nucleotide sequence ID" value="NZ_CP009935.1"/>
</dbReference>
<dbReference type="SMR" id="A9R2S0"/>
<dbReference type="GeneID" id="96662409"/>
<dbReference type="KEGG" id="ypg:YpAngola_A3245"/>
<dbReference type="PATRIC" id="fig|349746.12.peg.4310"/>
<dbReference type="GO" id="GO:0005886">
    <property type="term" value="C:plasma membrane"/>
    <property type="evidence" value="ECO:0007669"/>
    <property type="project" value="UniProtKB-SubCell"/>
</dbReference>
<dbReference type="GO" id="GO:0051978">
    <property type="term" value="F:lysophospholipid:sodium symporter activity"/>
    <property type="evidence" value="ECO:0007669"/>
    <property type="project" value="InterPro"/>
</dbReference>
<dbReference type="CDD" id="cd06173">
    <property type="entry name" value="MFS_MefA_like"/>
    <property type="match status" value="1"/>
</dbReference>
<dbReference type="Gene3D" id="1.20.1250.20">
    <property type="entry name" value="MFS general substrate transporter like domains"/>
    <property type="match status" value="1"/>
</dbReference>
<dbReference type="HAMAP" id="MF_01585">
    <property type="entry name" value="MFS_LplT"/>
    <property type="match status" value="1"/>
</dbReference>
<dbReference type="InterPro" id="IPR023727">
    <property type="entry name" value="LysoPLipid__transptr_LplT"/>
</dbReference>
<dbReference type="InterPro" id="IPR011701">
    <property type="entry name" value="MFS"/>
</dbReference>
<dbReference type="InterPro" id="IPR036259">
    <property type="entry name" value="MFS_trans_sf"/>
</dbReference>
<dbReference type="NCBIfam" id="NF008397">
    <property type="entry name" value="PRK11195.1"/>
    <property type="match status" value="1"/>
</dbReference>
<dbReference type="PANTHER" id="PTHR43266">
    <property type="entry name" value="MACROLIDE-EFFLUX PROTEIN"/>
    <property type="match status" value="1"/>
</dbReference>
<dbReference type="PANTHER" id="PTHR43266:SF2">
    <property type="entry name" value="MAJOR FACILITATOR SUPERFAMILY (MFS) PROFILE DOMAIN-CONTAINING PROTEIN"/>
    <property type="match status" value="1"/>
</dbReference>
<dbReference type="Pfam" id="PF07690">
    <property type="entry name" value="MFS_1"/>
    <property type="match status" value="1"/>
</dbReference>
<dbReference type="SUPFAM" id="SSF103473">
    <property type="entry name" value="MFS general substrate transporter"/>
    <property type="match status" value="1"/>
</dbReference>
<proteinExistence type="inferred from homology"/>
<feature type="chain" id="PRO_1000201282" description="Lysophospholipid transporter LplT">
    <location>
        <begin position="1"/>
        <end position="406"/>
    </location>
</feature>
<feature type="transmembrane region" description="Helical" evidence="1">
    <location>
        <begin position="16"/>
        <end position="36"/>
    </location>
</feature>
<feature type="transmembrane region" description="Helical" evidence="1">
    <location>
        <begin position="53"/>
        <end position="73"/>
    </location>
</feature>
<feature type="transmembrane region" description="Helical" evidence="1">
    <location>
        <begin position="91"/>
        <end position="111"/>
    </location>
</feature>
<feature type="transmembrane region" description="Helical" evidence="1">
    <location>
        <begin position="139"/>
        <end position="159"/>
    </location>
</feature>
<feature type="transmembrane region" description="Helical" evidence="1">
    <location>
        <begin position="164"/>
        <end position="184"/>
    </location>
</feature>
<feature type="transmembrane region" description="Helical" evidence="1">
    <location>
        <begin position="227"/>
        <end position="247"/>
    </location>
</feature>
<feature type="transmembrane region" description="Helical" evidence="1">
    <location>
        <begin position="253"/>
        <end position="273"/>
    </location>
</feature>
<feature type="transmembrane region" description="Helical" evidence="1">
    <location>
        <begin position="285"/>
        <end position="305"/>
    </location>
</feature>
<feature type="transmembrane region" description="Helical" evidence="1">
    <location>
        <begin position="310"/>
        <end position="330"/>
    </location>
</feature>
<feature type="transmembrane region" description="Helical" evidence="1">
    <location>
        <begin position="349"/>
        <end position="369"/>
    </location>
</feature>
<feature type="transmembrane region" description="Helical" evidence="1">
    <location>
        <begin position="372"/>
        <end position="392"/>
    </location>
</feature>
<keyword id="KW-0997">Cell inner membrane</keyword>
<keyword id="KW-1003">Cell membrane</keyword>
<keyword id="KW-0445">Lipid transport</keyword>
<keyword id="KW-0472">Membrane</keyword>
<keyword id="KW-0812">Transmembrane</keyword>
<keyword id="KW-1133">Transmembrane helix</keyword>
<keyword id="KW-0813">Transport</keyword>
<sequence length="406" mass="42841">MSQDVLADKPLLSRSMVAVLCAQFFSAFGDNALLFATLALIKQQLYPDWSQPILQMAFVATYIVLAPFVGQIADGFAKGRVMMVANGLKLAGALVICFGLNPFLGYSLVGVGAAAYSPAKYGILGEITSGEQLVKANGMMEASTIAAILLGSVAGGILADWHLMAALGVCALVYAIAVIANLFIPRLAAARSGASWRPRAMTGSFFTACRLLWQDSETRFSLAGTSLFWGAGVTLRFLLVLWVPVALGIADNATPTLLNAMVAIGIVVGAGAAARFVTLKTVKRCLPAGVLIGVMVTIFSLQNSMPMAYLLLIIIGILGGFFVVPLNALLQERGKHSVGAGNAIAVQNLGENTAMLFMLGLYSLVVKLGAPVVAVGVGFGVVFALAIALLWGWQWRQQRQKTRQPE</sequence>
<organism>
    <name type="scientific">Yersinia pestis bv. Antiqua (strain Angola)</name>
    <dbReference type="NCBI Taxonomy" id="349746"/>
    <lineage>
        <taxon>Bacteria</taxon>
        <taxon>Pseudomonadati</taxon>
        <taxon>Pseudomonadota</taxon>
        <taxon>Gammaproteobacteria</taxon>
        <taxon>Enterobacterales</taxon>
        <taxon>Yersiniaceae</taxon>
        <taxon>Yersinia</taxon>
    </lineage>
</organism>
<comment type="function">
    <text evidence="1">Catalyzes the facilitated diffusion of 2-acyl-glycero-3-phosphoethanolamine (2-acyl-GPE) into the cell.</text>
</comment>
<comment type="subcellular location">
    <subcellularLocation>
        <location evidence="1">Cell inner membrane</location>
        <topology evidence="1">Multi-pass membrane protein</topology>
    </subcellularLocation>
</comment>
<comment type="similarity">
    <text evidence="1">Belongs to the major facilitator superfamily. LplT (TC 2.A.1.42) family.</text>
</comment>